<organism>
    <name type="scientific">Oryctolagus cuniculus</name>
    <name type="common">Rabbit</name>
    <dbReference type="NCBI Taxonomy" id="9986"/>
    <lineage>
        <taxon>Eukaryota</taxon>
        <taxon>Metazoa</taxon>
        <taxon>Chordata</taxon>
        <taxon>Craniata</taxon>
        <taxon>Vertebrata</taxon>
        <taxon>Euteleostomi</taxon>
        <taxon>Mammalia</taxon>
        <taxon>Eutheria</taxon>
        <taxon>Euarchontoglires</taxon>
        <taxon>Glires</taxon>
        <taxon>Lagomorpha</taxon>
        <taxon>Leporidae</taxon>
        <taxon>Oryctolagus</taxon>
    </lineage>
</organism>
<feature type="chain" id="PRO_0000265958" description="Sodium/potassium-transporting ATPase subunit beta-1">
    <location>
        <begin position="1"/>
        <end position="303"/>
    </location>
</feature>
<feature type="topological domain" description="Cytoplasmic" evidence="5">
    <location>
        <begin position="1"/>
        <end position="34"/>
    </location>
</feature>
<feature type="transmembrane region" description="Helical; Signal-anchor for type II membrane protein" evidence="5">
    <location>
        <begin position="35"/>
        <end position="62"/>
    </location>
</feature>
<feature type="topological domain" description="Extracellular" evidence="5">
    <location>
        <begin position="63"/>
        <end position="303"/>
    </location>
</feature>
<feature type="region of interest" description="immunoglobulin-like" evidence="1">
    <location>
        <begin position="191"/>
        <end position="303"/>
    </location>
</feature>
<feature type="modified residue" description="Phosphoserine" evidence="3">
    <location>
        <position position="11"/>
    </location>
</feature>
<feature type="modified residue" description="Phosphotyrosine" evidence="4">
    <location>
        <position position="101"/>
    </location>
</feature>
<feature type="glycosylation site" description="N-linked (GlcNAc...) asparagine" evidence="5">
    <location>
        <position position="158"/>
    </location>
</feature>
<feature type="glycosylation site" description="N-linked (GlcNAc...) asparagine" evidence="5">
    <location>
        <position position="193"/>
    </location>
</feature>
<feature type="glycosylation site" description="N-linked (GlcNAc...) asparagine" evidence="5">
    <location>
        <position position="265"/>
    </location>
</feature>
<feature type="disulfide bond" evidence="1">
    <location>
        <begin position="126"/>
        <end position="149"/>
    </location>
</feature>
<feature type="disulfide bond" evidence="1">
    <location>
        <begin position="159"/>
        <end position="175"/>
    </location>
</feature>
<feature type="disulfide bond" evidence="1">
    <location>
        <begin position="213"/>
        <end position="276"/>
    </location>
</feature>
<keyword id="KW-0130">Cell adhesion</keyword>
<keyword id="KW-1003">Cell membrane</keyword>
<keyword id="KW-1015">Disulfide bond</keyword>
<keyword id="KW-0318">Glutathionylation</keyword>
<keyword id="KW-0325">Glycoprotein</keyword>
<keyword id="KW-0406">Ion transport</keyword>
<keyword id="KW-0472">Membrane</keyword>
<keyword id="KW-0597">Phosphoprotein</keyword>
<keyword id="KW-0630">Potassium</keyword>
<keyword id="KW-0633">Potassium transport</keyword>
<keyword id="KW-1185">Reference proteome</keyword>
<keyword id="KW-0735">Signal-anchor</keyword>
<keyword id="KW-0915">Sodium</keyword>
<keyword id="KW-0739">Sodium transport</keyword>
<keyword id="KW-0740">Sodium/potassium transport</keyword>
<keyword id="KW-0812">Transmembrane</keyword>
<keyword id="KW-1133">Transmembrane helix</keyword>
<keyword id="KW-0813">Transport</keyword>
<comment type="function">
    <text evidence="1">This is the non-catalytic component of the active enzyme, which catalyzes the hydrolysis of ATP coupled with the exchange of Na(+) and K(+) ions across the plasma membrane. The beta subunit regulates, through assembly of alpha/beta heterodimers, the number of sodium pumps transported to the plasma membrane (By similarity).</text>
</comment>
<comment type="function">
    <text evidence="1">Involved in cell adhesion and establishing epithelial cell polarity.</text>
</comment>
<comment type="subunit">
    <text evidence="2 3 4 6">The sodium/potassium-transporting ATPase is composed of a catalytic alpha subunit, an auxiliary non-catalytic beta subunit and an additional regulatory subunit. Interacts with catalytic subunit ATP12A. Interacts with regulatory subunit FXYD1 (By similarity). Interacts with regulatory subunit FXYD3 (PubMed:21454534). Interacts with NKAIN1, NKAIN2 and NKAIN4 (By similarity). Interacts with MLC1 (By similarity). Part of a complex containing MLC1, TRPV4, AQP4 and HEPACAM (By similarity). Interacts with KIRREL3 (By similarity). Interacts with OBSCN (via protein kinase domain 1) (By similarity).</text>
</comment>
<comment type="interaction">
    <interactant intactId="EBI-9685670">
        <id>Q9TT37</id>
    </interactant>
    <interactant intactId="EBI-9685690">
        <id>Q9N0Z6</id>
        <label>ATP1A1</label>
    </interactant>
    <organismsDiffer>false</organismsDiffer>
    <experiments>2</experiments>
</comment>
<comment type="subcellular location">
    <subcellularLocation>
        <location evidence="5">Cell membrane</location>
        <topology evidence="5">Single-pass type II membrane protein</topology>
    </subcellularLocation>
    <subcellularLocation>
        <location evidence="3">Apical cell membrane</location>
        <topology evidence="5">Single-pass type II membrane protein</topology>
    </subcellularLocation>
    <subcellularLocation>
        <location evidence="4">Cell membrane</location>
        <location evidence="4">Sarcolemma</location>
    </subcellularLocation>
    <text evidence="4">Colocalizes with OBSCN at the intercalated disk and sarcolemma in cardiomyocytes. Localizes in long striations at the level of Z and M lines.</text>
</comment>
<comment type="domain">
    <text evidence="1">The C-terminal lobe folds into an immunoglobulin-like domain and mediates cell adhesion properties.</text>
</comment>
<comment type="PTM">
    <text evidence="3 4">Glutathionylated (By similarity). N-glycosylated (By similarity).</text>
</comment>
<comment type="similarity">
    <text evidence="7">Belongs to the X(+)/potassium ATPases subunit beta family.</text>
</comment>
<proteinExistence type="evidence at protein level"/>
<sequence length="303" mass="34940">MARGKAKEEGSWKKFIWNSEKKEFLGRTGGSWFKILLFYVIFYGCLAGIFIGTIQVMLLTISEFKPTYQDRVAPPGLTQVPQIQKTEIAFRPSDPKSYEEYVVNIVRFLEKYKDSAQKDDMVFEDCGDVPSEPKERGEFNNERGQRKVCRFKLNWLGNCSGIDDETYGYKDGKPCIIIKLNRVLGFKPKPPKNDSLEFSPGTKYNPNVLPVQCTGKRDEDKEKVGSMEYFGMGDYAGFPLQYYPYYGKLLQPKYLQPLLAVQFTNLTMDTEIRIECKAYGENIGYSEKDRFQGRFDVKIEVKS</sequence>
<dbReference type="EMBL" id="AF204927">
    <property type="protein sequence ID" value="AAF18134.1"/>
    <property type="molecule type" value="mRNA"/>
</dbReference>
<dbReference type="RefSeq" id="NP_001075542.1">
    <property type="nucleotide sequence ID" value="NM_001082073.1"/>
</dbReference>
<dbReference type="SMR" id="Q9TT37"/>
<dbReference type="FunCoup" id="Q9TT37">
    <property type="interactions" value="328"/>
</dbReference>
<dbReference type="IntAct" id="Q9TT37">
    <property type="interactions" value="3"/>
</dbReference>
<dbReference type="STRING" id="9986.ENSOCUP00000039420"/>
<dbReference type="GlyCosmos" id="Q9TT37">
    <property type="glycosylation" value="3 sites, No reported glycans"/>
</dbReference>
<dbReference type="PaxDb" id="9986-ENSOCUP00000020666"/>
<dbReference type="GeneID" id="100008749"/>
<dbReference type="KEGG" id="ocu:100008749"/>
<dbReference type="CTD" id="481"/>
<dbReference type="eggNOG" id="KOG3927">
    <property type="taxonomic scope" value="Eukaryota"/>
</dbReference>
<dbReference type="InParanoid" id="Q9TT37"/>
<dbReference type="OrthoDB" id="5912413at2759"/>
<dbReference type="Proteomes" id="UP000001811">
    <property type="component" value="Unplaced"/>
</dbReference>
<dbReference type="GO" id="GO:0016324">
    <property type="term" value="C:apical plasma membrane"/>
    <property type="evidence" value="ECO:0000250"/>
    <property type="project" value="UniProtKB"/>
</dbReference>
<dbReference type="GO" id="GO:0042383">
    <property type="term" value="C:sarcolemma"/>
    <property type="evidence" value="ECO:0007669"/>
    <property type="project" value="UniProtKB-SubCell"/>
</dbReference>
<dbReference type="GO" id="GO:0005890">
    <property type="term" value="C:sodium:potassium-exchanging ATPase complex"/>
    <property type="evidence" value="ECO:0007669"/>
    <property type="project" value="InterPro"/>
</dbReference>
<dbReference type="GO" id="GO:0001671">
    <property type="term" value="F:ATPase activator activity"/>
    <property type="evidence" value="ECO:0007669"/>
    <property type="project" value="TreeGrafter"/>
</dbReference>
<dbReference type="GO" id="GO:0051117">
    <property type="term" value="F:ATPase binding"/>
    <property type="evidence" value="ECO:0000353"/>
    <property type="project" value="BHF-UCL"/>
</dbReference>
<dbReference type="GO" id="GO:0050998">
    <property type="term" value="F:nitric-oxide synthase binding"/>
    <property type="evidence" value="ECO:0000353"/>
    <property type="project" value="BHF-UCL"/>
</dbReference>
<dbReference type="GO" id="GO:0007155">
    <property type="term" value="P:cell adhesion"/>
    <property type="evidence" value="ECO:0007669"/>
    <property type="project" value="UniProtKB-KW"/>
</dbReference>
<dbReference type="GO" id="GO:0030007">
    <property type="term" value="P:intracellular potassium ion homeostasis"/>
    <property type="evidence" value="ECO:0007669"/>
    <property type="project" value="TreeGrafter"/>
</dbReference>
<dbReference type="GO" id="GO:0006883">
    <property type="term" value="P:intracellular sodium ion homeostasis"/>
    <property type="evidence" value="ECO:0007669"/>
    <property type="project" value="TreeGrafter"/>
</dbReference>
<dbReference type="GO" id="GO:1990573">
    <property type="term" value="P:potassium ion import across plasma membrane"/>
    <property type="evidence" value="ECO:0007669"/>
    <property type="project" value="TreeGrafter"/>
</dbReference>
<dbReference type="GO" id="GO:0036376">
    <property type="term" value="P:sodium ion export across plasma membrane"/>
    <property type="evidence" value="ECO:0007669"/>
    <property type="project" value="TreeGrafter"/>
</dbReference>
<dbReference type="FunFam" id="1.20.5.170:FF:000062">
    <property type="entry name" value="Sodium/potassium-transporting ATPase subunit beta"/>
    <property type="match status" value="1"/>
</dbReference>
<dbReference type="FunFam" id="2.60.40.1660:FF:000002">
    <property type="entry name" value="Sodium/potassium-transporting ATPase subunit beta"/>
    <property type="match status" value="1"/>
</dbReference>
<dbReference type="Gene3D" id="1.20.5.170">
    <property type="match status" value="1"/>
</dbReference>
<dbReference type="Gene3D" id="2.60.40.1660">
    <property type="entry name" value="Na, k-atpase alpha subunit"/>
    <property type="match status" value="1"/>
</dbReference>
<dbReference type="InterPro" id="IPR000402">
    <property type="entry name" value="Na/K_ATPase_sub_beta"/>
</dbReference>
<dbReference type="InterPro" id="IPR038702">
    <property type="entry name" value="Na/K_ATPase_sub_beta_sf"/>
</dbReference>
<dbReference type="NCBIfam" id="TIGR01107">
    <property type="entry name" value="Na_K_ATPase_bet"/>
    <property type="match status" value="1"/>
</dbReference>
<dbReference type="PANTHER" id="PTHR11523">
    <property type="entry name" value="SODIUM/POTASSIUM-DEPENDENT ATPASE BETA SUBUNIT"/>
    <property type="match status" value="1"/>
</dbReference>
<dbReference type="PANTHER" id="PTHR11523:SF10">
    <property type="entry name" value="SODIUM_POTASSIUM-TRANSPORTING ATPASE SUBUNIT BETA-1"/>
    <property type="match status" value="1"/>
</dbReference>
<dbReference type="Pfam" id="PF00287">
    <property type="entry name" value="Na_K-ATPase"/>
    <property type="match status" value="1"/>
</dbReference>
<dbReference type="PROSITE" id="PS00390">
    <property type="entry name" value="ATPASE_NA_K_BETA_1"/>
    <property type="match status" value="1"/>
</dbReference>
<dbReference type="PROSITE" id="PS00391">
    <property type="entry name" value="ATPASE_NA_K_BETA_2"/>
    <property type="match status" value="1"/>
</dbReference>
<evidence type="ECO:0000250" key="1"/>
<evidence type="ECO:0000250" key="2">
    <source>
        <dbReference type="UniProtKB" id="P05026"/>
    </source>
</evidence>
<evidence type="ECO:0000250" key="3">
    <source>
        <dbReference type="UniProtKB" id="P07340"/>
    </source>
</evidence>
<evidence type="ECO:0000250" key="4">
    <source>
        <dbReference type="UniProtKB" id="P14094"/>
    </source>
</evidence>
<evidence type="ECO:0000255" key="5"/>
<evidence type="ECO:0000269" key="6">
    <source>
    </source>
</evidence>
<evidence type="ECO:0000305" key="7"/>
<protein>
    <recommendedName>
        <fullName>Sodium/potassium-transporting ATPase subunit beta-1</fullName>
    </recommendedName>
    <alternativeName>
        <fullName>Sodium/potassium-dependent ATPase subunit beta-1</fullName>
    </alternativeName>
</protein>
<gene>
    <name type="primary">ATP1B1</name>
</gene>
<reference key="1">
    <citation type="journal article" date="1999" name="Semin. Nephrol.">
        <title>Molecular identification of the renal H+,K+-ATPases.</title>
        <authorList>
            <person name="Caviston T.L."/>
            <person name="Campbell W.G."/>
            <person name="Wingo C.S."/>
            <person name="Cain B.D."/>
        </authorList>
    </citation>
    <scope>NUCLEOTIDE SEQUENCE [MRNA]</scope>
    <source>
        <strain>New Zealand white</strain>
    </source>
</reference>
<reference key="2">
    <citation type="journal article" date="2011" name="J. Biol. Chem.">
        <title>FXYD proteins reverse inhibition of the Na+-K+ pump mediated by glutathionylation of its beta1 subunit.</title>
        <authorList>
            <person name="Bibert S."/>
            <person name="Liu C.C."/>
            <person name="Figtree G.A."/>
            <person name="Garcia A."/>
            <person name="Hamilton E.J."/>
            <person name="Marassi F.M."/>
            <person name="Sweadner K.J."/>
            <person name="Cornelius F."/>
            <person name="Geering K."/>
            <person name="Rasmussen H.H."/>
        </authorList>
    </citation>
    <scope>INTERACTION WITH FXYD3</scope>
</reference>
<name>AT1B1_RABIT</name>
<accession>Q9TT37</accession>